<organism>
    <name type="scientific">Gallus gallus</name>
    <name type="common">Chicken</name>
    <dbReference type="NCBI Taxonomy" id="9031"/>
    <lineage>
        <taxon>Eukaryota</taxon>
        <taxon>Metazoa</taxon>
        <taxon>Chordata</taxon>
        <taxon>Craniata</taxon>
        <taxon>Vertebrata</taxon>
        <taxon>Euteleostomi</taxon>
        <taxon>Archelosauria</taxon>
        <taxon>Archosauria</taxon>
        <taxon>Dinosauria</taxon>
        <taxon>Saurischia</taxon>
        <taxon>Theropoda</taxon>
        <taxon>Coelurosauria</taxon>
        <taxon>Aves</taxon>
        <taxon>Neognathae</taxon>
        <taxon>Galloanserae</taxon>
        <taxon>Galliformes</taxon>
        <taxon>Phasianidae</taxon>
        <taxon>Phasianinae</taxon>
        <taxon>Gallus</taxon>
    </lineage>
</organism>
<sequence length="292" mass="33119">MPRRLCALLLLASQCLGSTAGLFPFGEPDFSYKRSNCKPIPAPMLLCRGIEYQSMRLPNLLGHETVQEVLEQATTWIPLVQKQCHPDTRKFLCSLFAPVCIDDLDEIIQPCHSLCEEVKESCAPVMSAFGFPWPDMLDCSRFPKDNDLCIPLASSDHILPVTREAPKVCDACKNKNEDDNDIMENLCKNDFALKIKVKEIAYINGDTKITPETKSKTIYKLNGLTERDLRKIVLWLKGGLQCTCDEMNDINVPYLVMGQKQAGELVITSLKRWQKGQRAFKRFSRSIRKLQC</sequence>
<reference key="1">
    <citation type="journal article" date="2000" name="Dev. Biol.">
        <title>Cloning and expression of the Wnt antagonists Sfrp-2 and Frzb during chick development.</title>
        <authorList>
            <person name="Ladher R.K."/>
            <person name="Church V.L."/>
            <person name="Allen S."/>
            <person name="Robson L."/>
            <person name="Abdelfattah A."/>
            <person name="Brown N.A."/>
            <person name="Hattersley G."/>
            <person name="Rosen V."/>
            <person name="Luyten F.P."/>
            <person name="Dale L."/>
            <person name="Francis-West P.H."/>
        </authorList>
    </citation>
    <scope>NUCLEOTIDE SEQUENCE [MRNA]</scope>
    <scope>DEVELOPMENTAL STAGE</scope>
    <source>
        <tissue>Embryo</tissue>
    </source>
</reference>
<dbReference type="EMBL" id="AF218056">
    <property type="protein sequence ID" value="AAF27642.1"/>
    <property type="molecule type" value="mRNA"/>
</dbReference>
<dbReference type="RefSeq" id="NP_990104.1">
    <property type="nucleotide sequence ID" value="NM_204773.1"/>
</dbReference>
<dbReference type="SMR" id="Q9IA96"/>
<dbReference type="FunCoup" id="Q9IA96">
    <property type="interactions" value="102"/>
</dbReference>
<dbReference type="STRING" id="9031.ENSGALP00000015022"/>
<dbReference type="MEROPS" id="I93.002"/>
<dbReference type="PaxDb" id="9031-ENSGALP00000015022"/>
<dbReference type="GeneID" id="395546"/>
<dbReference type="KEGG" id="gga:395546"/>
<dbReference type="CTD" id="6423"/>
<dbReference type="VEuPathDB" id="HostDB:geneid_395546"/>
<dbReference type="eggNOG" id="KOG3577">
    <property type="taxonomic scope" value="Eukaryota"/>
</dbReference>
<dbReference type="InParanoid" id="Q9IA96"/>
<dbReference type="OrthoDB" id="5985572at2759"/>
<dbReference type="PhylomeDB" id="Q9IA96"/>
<dbReference type="PRO" id="PR:Q9IA96"/>
<dbReference type="Proteomes" id="UP000000539">
    <property type="component" value="Unassembled WGS sequence"/>
</dbReference>
<dbReference type="GO" id="GO:0005615">
    <property type="term" value="C:extracellular space"/>
    <property type="evidence" value="ECO:0000318"/>
    <property type="project" value="GO_Central"/>
</dbReference>
<dbReference type="GO" id="GO:0017147">
    <property type="term" value="F:Wnt-protein binding"/>
    <property type="evidence" value="ECO:0000318"/>
    <property type="project" value="GO_Central"/>
</dbReference>
<dbReference type="GO" id="GO:0006915">
    <property type="term" value="P:apoptotic process"/>
    <property type="evidence" value="ECO:0000304"/>
    <property type="project" value="AgBase"/>
</dbReference>
<dbReference type="GO" id="GO:0060070">
    <property type="term" value="P:canonical Wnt signaling pathway"/>
    <property type="evidence" value="ECO:0000318"/>
    <property type="project" value="GO_Central"/>
</dbReference>
<dbReference type="GO" id="GO:0030154">
    <property type="term" value="P:cell differentiation"/>
    <property type="evidence" value="ECO:0007669"/>
    <property type="project" value="UniProtKB-KW"/>
</dbReference>
<dbReference type="GO" id="GO:0035567">
    <property type="term" value="P:non-canonical Wnt signaling pathway"/>
    <property type="evidence" value="ECO:0000318"/>
    <property type="project" value="GO_Central"/>
</dbReference>
<dbReference type="CDD" id="cd07446">
    <property type="entry name" value="CRD_SFRP2"/>
    <property type="match status" value="1"/>
</dbReference>
<dbReference type="CDD" id="cd03580">
    <property type="entry name" value="NTR_Sfrp1_like"/>
    <property type="match status" value="1"/>
</dbReference>
<dbReference type="FunFam" id="2.40.50.120:FF:000006">
    <property type="entry name" value="Secreted frizzled-related protein 2"/>
    <property type="match status" value="1"/>
</dbReference>
<dbReference type="FunFam" id="1.10.2000.10:FF:000001">
    <property type="entry name" value="secreted frizzled-related protein 2"/>
    <property type="match status" value="1"/>
</dbReference>
<dbReference type="Gene3D" id="2.40.50.120">
    <property type="match status" value="1"/>
</dbReference>
<dbReference type="Gene3D" id="1.10.2000.10">
    <property type="entry name" value="Frizzled cysteine-rich domain"/>
    <property type="match status" value="1"/>
</dbReference>
<dbReference type="InterPro" id="IPR015526">
    <property type="entry name" value="Frizzled/SFRP"/>
</dbReference>
<dbReference type="InterPro" id="IPR020067">
    <property type="entry name" value="Frizzled_dom"/>
</dbReference>
<dbReference type="InterPro" id="IPR036790">
    <property type="entry name" value="Frizzled_dom_sf"/>
</dbReference>
<dbReference type="InterPro" id="IPR001134">
    <property type="entry name" value="Netrin_domain"/>
</dbReference>
<dbReference type="InterPro" id="IPR018933">
    <property type="entry name" value="Netrin_module_non-TIMP"/>
</dbReference>
<dbReference type="InterPro" id="IPR041764">
    <property type="entry name" value="SFRP2_CRD"/>
</dbReference>
<dbReference type="InterPro" id="IPR008993">
    <property type="entry name" value="TIMP-like_OB-fold"/>
</dbReference>
<dbReference type="PANTHER" id="PTHR11309">
    <property type="entry name" value="FRIZZLED"/>
    <property type="match status" value="1"/>
</dbReference>
<dbReference type="PANTHER" id="PTHR11309:SF45">
    <property type="entry name" value="SECRETED FRIZZLED-RELATED PROTEIN 2"/>
    <property type="match status" value="1"/>
</dbReference>
<dbReference type="Pfam" id="PF01392">
    <property type="entry name" value="Fz"/>
    <property type="match status" value="1"/>
</dbReference>
<dbReference type="Pfam" id="PF01759">
    <property type="entry name" value="NTR"/>
    <property type="match status" value="1"/>
</dbReference>
<dbReference type="SMART" id="SM00643">
    <property type="entry name" value="C345C"/>
    <property type="match status" value="1"/>
</dbReference>
<dbReference type="SMART" id="SM00063">
    <property type="entry name" value="FRI"/>
    <property type="match status" value="1"/>
</dbReference>
<dbReference type="SUPFAM" id="SSF63501">
    <property type="entry name" value="Frizzled cysteine-rich domain"/>
    <property type="match status" value="1"/>
</dbReference>
<dbReference type="SUPFAM" id="SSF50242">
    <property type="entry name" value="TIMP-like"/>
    <property type="match status" value="1"/>
</dbReference>
<dbReference type="PROSITE" id="PS50038">
    <property type="entry name" value="FZ"/>
    <property type="match status" value="1"/>
</dbReference>
<dbReference type="PROSITE" id="PS50189">
    <property type="entry name" value="NTR"/>
    <property type="match status" value="1"/>
</dbReference>
<evidence type="ECO:0000250" key="1"/>
<evidence type="ECO:0000255" key="2"/>
<evidence type="ECO:0000255" key="3">
    <source>
        <dbReference type="PROSITE-ProRule" id="PRU00090"/>
    </source>
</evidence>
<evidence type="ECO:0000255" key="4">
    <source>
        <dbReference type="PROSITE-ProRule" id="PRU00295"/>
    </source>
</evidence>
<evidence type="ECO:0000269" key="5">
    <source>
    </source>
</evidence>
<evidence type="ECO:0000305" key="6"/>
<protein>
    <recommendedName>
        <fullName>Secreted frizzled-related protein 2</fullName>
        <shortName>sFRP-2</shortName>
    </recommendedName>
</protein>
<keyword id="KW-0217">Developmental protein</keyword>
<keyword id="KW-0221">Differentiation</keyword>
<keyword id="KW-1015">Disulfide bond</keyword>
<keyword id="KW-1185">Reference proteome</keyword>
<keyword id="KW-0964">Secreted</keyword>
<keyword id="KW-0732">Signal</keyword>
<keyword id="KW-0879">Wnt signaling pathway</keyword>
<proteinExistence type="evidence at transcript level"/>
<name>SFRP2_CHICK</name>
<comment type="function">
    <text>Soluble frizzled-related proteins (sFRPS) function as modulators of Wnt signaling through direct interaction with Wnts. They have a role in regulating cell growth and differentiation in specific cell types. SFRP2 appears to be associated with myogenesis.</text>
</comment>
<comment type="subcellular location">
    <subcellularLocation>
        <location evidence="1">Secreted</location>
    </subcellularLocation>
</comment>
<comment type="developmental stage">
    <text evidence="5">In embryo, expressed in developing neural structures as well as in heart, branchial arches and limb buds. First expressed at stage 7 in the neural plate with lower expression in the midline. By stage 9, expressed through out the developing neural tube with lower levels in the future posterior mesencephalon and rhombomere 3. In anterior regions, highest expression in the dorsal neural tube and, more posteriorly throughout the closing neural tube. Also expressed in the ectoderm flanking the neural tube. In the developing brain, expression found in the presumptive forbrain. By stage 12, expression restricted to the dorsal prosencephalon, hindbrain and posterior neural tube. In the placodes, first expressed at stage 11, in the otic placode. By stage 15, expressed in the olfactory and epibranchial placodes. In facial primordia, expression found at stage 2,0 throughout the ectoderm. By stage 24, high mesenchymal expression in a small region of the posterior maxillary primordia, and in the lateral region of the mandibular primordia. By stage 28, expressed in a subset of muscles, including the intermandibularis muscle and the muscle medial to the eye. In the developing trunk, expression found throughout the dermamyotome in the more developed somites. By stage 20, expression restricted to the small region in the dorsal medial lip in all somites. In addition, also expressed in the ventral lateral lip of the dermamyotome that gives rise to the muscles of the limbs and body wall. During limb development, expressed between stages 20 and 30, in the proximal mesenchyme in association with developing muscles. Between stages 27 and 30, expression found in mesenchyme containing undifferentiated myogenic cells. In the developing heart, expression restricted to the myocardial and endocardial cell layers of the trabeculae in the ventricular compartment between stages 20 and 28.</text>
</comment>
<comment type="domain">
    <text evidence="1">The FZ domain is involved in binding with Wnt ligands.</text>
</comment>
<comment type="similarity">
    <text evidence="6">Belongs to the secreted frizzled-related protein (sFRP) family.</text>
</comment>
<gene>
    <name type="primary">SFRP2</name>
</gene>
<feature type="signal peptide" evidence="2">
    <location>
        <begin position="1"/>
        <end position="20"/>
    </location>
</feature>
<feature type="chain" id="PRO_0000032544" description="Secreted frizzled-related protein 2">
    <location>
        <begin position="21"/>
        <end position="292"/>
    </location>
</feature>
<feature type="domain" description="FZ" evidence="3">
    <location>
        <begin position="32"/>
        <end position="152"/>
    </location>
</feature>
<feature type="domain" description="NTR" evidence="4">
    <location>
        <begin position="169"/>
        <end position="292"/>
    </location>
</feature>
<feature type="disulfide bond" evidence="1">
    <location>
        <begin position="37"/>
        <end position="100"/>
    </location>
</feature>
<feature type="disulfide bond" evidence="1">
    <location>
        <begin position="47"/>
        <end position="93"/>
    </location>
</feature>
<feature type="disulfide bond" evidence="1">
    <location>
        <begin position="84"/>
        <end position="122"/>
    </location>
</feature>
<feature type="disulfide bond" evidence="1">
    <location>
        <begin position="111"/>
        <end position="149"/>
    </location>
</feature>
<feature type="disulfide bond" evidence="1">
    <location>
        <begin position="115"/>
        <end position="139"/>
    </location>
</feature>
<feature type="disulfide bond" evidence="1">
    <location>
        <begin position="169"/>
        <end position="242"/>
    </location>
</feature>
<feature type="disulfide bond" evidence="1">
    <location>
        <begin position="187"/>
        <end position="292"/>
    </location>
</feature>
<accession>Q9IA96</accession>